<dbReference type="EMBL" id="AE008922">
    <property type="protein sequence ID" value="AAM43314.1"/>
    <property type="molecule type" value="Genomic_DNA"/>
</dbReference>
<dbReference type="RefSeq" id="NP_639432.1">
    <property type="nucleotide sequence ID" value="NC_003902.1"/>
</dbReference>
<dbReference type="RefSeq" id="WP_011039162.1">
    <property type="nucleotide sequence ID" value="NC_003902.1"/>
</dbReference>
<dbReference type="SMR" id="Q8P3H8"/>
<dbReference type="STRING" id="190485.XCC4093"/>
<dbReference type="EnsemblBacteria" id="AAM43314">
    <property type="protein sequence ID" value="AAM43314"/>
    <property type="gene ID" value="XCC4093"/>
</dbReference>
<dbReference type="KEGG" id="xcc:XCC4093"/>
<dbReference type="PATRIC" id="fig|190485.4.peg.4386"/>
<dbReference type="eggNOG" id="COG1826">
    <property type="taxonomic scope" value="Bacteria"/>
</dbReference>
<dbReference type="HOGENOM" id="CLU_086034_5_3_6"/>
<dbReference type="OrthoDB" id="7066617at2"/>
<dbReference type="Proteomes" id="UP000001010">
    <property type="component" value="Chromosome"/>
</dbReference>
<dbReference type="GO" id="GO:0033281">
    <property type="term" value="C:TAT protein transport complex"/>
    <property type="evidence" value="ECO:0007669"/>
    <property type="project" value="UniProtKB-UniRule"/>
</dbReference>
<dbReference type="GO" id="GO:0008320">
    <property type="term" value="F:protein transmembrane transporter activity"/>
    <property type="evidence" value="ECO:0007669"/>
    <property type="project" value="UniProtKB-UniRule"/>
</dbReference>
<dbReference type="GO" id="GO:0043953">
    <property type="term" value="P:protein transport by the Tat complex"/>
    <property type="evidence" value="ECO:0007669"/>
    <property type="project" value="UniProtKB-UniRule"/>
</dbReference>
<dbReference type="Gene3D" id="1.20.5.3310">
    <property type="match status" value="1"/>
</dbReference>
<dbReference type="HAMAP" id="MF_00236">
    <property type="entry name" value="TatA_E"/>
    <property type="match status" value="1"/>
</dbReference>
<dbReference type="InterPro" id="IPR003369">
    <property type="entry name" value="TatA/B/E"/>
</dbReference>
<dbReference type="InterPro" id="IPR006312">
    <property type="entry name" value="TatA/E"/>
</dbReference>
<dbReference type="NCBIfam" id="NF002813">
    <property type="entry name" value="PRK02958.1"/>
    <property type="match status" value="1"/>
</dbReference>
<dbReference type="NCBIfam" id="NF003393">
    <property type="entry name" value="PRK04561.1"/>
    <property type="match status" value="1"/>
</dbReference>
<dbReference type="NCBIfam" id="TIGR01411">
    <property type="entry name" value="tatAE"/>
    <property type="match status" value="1"/>
</dbReference>
<dbReference type="PANTHER" id="PTHR42982">
    <property type="entry name" value="SEC-INDEPENDENT PROTEIN TRANSLOCASE PROTEIN TATA"/>
    <property type="match status" value="1"/>
</dbReference>
<dbReference type="PANTHER" id="PTHR42982:SF1">
    <property type="entry name" value="SEC-INDEPENDENT PROTEIN TRANSLOCASE PROTEIN TATA"/>
    <property type="match status" value="1"/>
</dbReference>
<dbReference type="Pfam" id="PF02416">
    <property type="entry name" value="TatA_B_E"/>
    <property type="match status" value="1"/>
</dbReference>
<proteinExistence type="inferred from homology"/>
<reference key="1">
    <citation type="journal article" date="2002" name="Nature">
        <title>Comparison of the genomes of two Xanthomonas pathogens with differing host specificities.</title>
        <authorList>
            <person name="da Silva A.C.R."/>
            <person name="Ferro J.A."/>
            <person name="Reinach F.C."/>
            <person name="Farah C.S."/>
            <person name="Furlan L.R."/>
            <person name="Quaggio R.B."/>
            <person name="Monteiro-Vitorello C.B."/>
            <person name="Van Sluys M.A."/>
            <person name="Almeida N.F. Jr."/>
            <person name="Alves L.M.C."/>
            <person name="do Amaral A.M."/>
            <person name="Bertolini M.C."/>
            <person name="Camargo L.E.A."/>
            <person name="Camarotte G."/>
            <person name="Cannavan F."/>
            <person name="Cardozo J."/>
            <person name="Chambergo F."/>
            <person name="Ciapina L.P."/>
            <person name="Cicarelli R.M.B."/>
            <person name="Coutinho L.L."/>
            <person name="Cursino-Santos J.R."/>
            <person name="El-Dorry H."/>
            <person name="Faria J.B."/>
            <person name="Ferreira A.J.S."/>
            <person name="Ferreira R.C.C."/>
            <person name="Ferro M.I.T."/>
            <person name="Formighieri E.F."/>
            <person name="Franco M.C."/>
            <person name="Greggio C.C."/>
            <person name="Gruber A."/>
            <person name="Katsuyama A.M."/>
            <person name="Kishi L.T."/>
            <person name="Leite R.P."/>
            <person name="Lemos E.G.M."/>
            <person name="Lemos M.V.F."/>
            <person name="Locali E.C."/>
            <person name="Machado M.A."/>
            <person name="Madeira A.M.B.N."/>
            <person name="Martinez-Rossi N.M."/>
            <person name="Martins E.C."/>
            <person name="Meidanis J."/>
            <person name="Menck C.F.M."/>
            <person name="Miyaki C.Y."/>
            <person name="Moon D.H."/>
            <person name="Moreira L.M."/>
            <person name="Novo M.T.M."/>
            <person name="Okura V.K."/>
            <person name="Oliveira M.C."/>
            <person name="Oliveira V.R."/>
            <person name="Pereira H.A."/>
            <person name="Rossi A."/>
            <person name="Sena J.A.D."/>
            <person name="Silva C."/>
            <person name="de Souza R.F."/>
            <person name="Spinola L.A.F."/>
            <person name="Takita M.A."/>
            <person name="Tamura R.E."/>
            <person name="Teixeira E.C."/>
            <person name="Tezza R.I.D."/>
            <person name="Trindade dos Santos M."/>
            <person name="Truffi D."/>
            <person name="Tsai S.M."/>
            <person name="White F.F."/>
            <person name="Setubal J.C."/>
            <person name="Kitajima J.P."/>
        </authorList>
    </citation>
    <scope>NUCLEOTIDE SEQUENCE [LARGE SCALE GENOMIC DNA]</scope>
    <source>
        <strain>ATCC 33913 / DSM 3586 / NCPPB 528 / LMG 568 / P 25</strain>
    </source>
</reference>
<gene>
    <name evidence="1" type="primary">tatA</name>
    <name type="ordered locus">XCC4093</name>
</gene>
<name>TATA_XANCP</name>
<feature type="chain" id="PRO_0000097967" description="Sec-independent protein translocase protein TatA">
    <location>
        <begin position="1"/>
        <end position="75"/>
    </location>
</feature>
<feature type="transmembrane region" description="Helical" evidence="1">
    <location>
        <begin position="1"/>
        <end position="21"/>
    </location>
</feature>
<feature type="region of interest" description="Disordered" evidence="2">
    <location>
        <begin position="41"/>
        <end position="75"/>
    </location>
</feature>
<organism>
    <name type="scientific">Xanthomonas campestris pv. campestris (strain ATCC 33913 / DSM 3586 / NCPPB 528 / LMG 568 / P 25)</name>
    <dbReference type="NCBI Taxonomy" id="190485"/>
    <lineage>
        <taxon>Bacteria</taxon>
        <taxon>Pseudomonadati</taxon>
        <taxon>Pseudomonadota</taxon>
        <taxon>Gammaproteobacteria</taxon>
        <taxon>Lysobacterales</taxon>
        <taxon>Lysobacteraceae</taxon>
        <taxon>Xanthomonas</taxon>
    </lineage>
</organism>
<protein>
    <recommendedName>
        <fullName evidence="1">Sec-independent protein translocase protein TatA</fullName>
    </recommendedName>
</protein>
<evidence type="ECO:0000255" key="1">
    <source>
        <dbReference type="HAMAP-Rule" id="MF_00236"/>
    </source>
</evidence>
<evidence type="ECO:0000256" key="2">
    <source>
        <dbReference type="SAM" id="MobiDB-lite"/>
    </source>
</evidence>
<accession>Q8P3H8</accession>
<keyword id="KW-0997">Cell inner membrane</keyword>
<keyword id="KW-1003">Cell membrane</keyword>
<keyword id="KW-0472">Membrane</keyword>
<keyword id="KW-0653">Protein transport</keyword>
<keyword id="KW-1185">Reference proteome</keyword>
<keyword id="KW-0811">Translocation</keyword>
<keyword id="KW-0812">Transmembrane</keyword>
<keyword id="KW-1133">Transmembrane helix</keyword>
<keyword id="KW-0813">Transport</keyword>
<comment type="function">
    <text evidence="1">Part of the twin-arginine translocation (Tat) system that transports large folded proteins containing a characteristic twin-arginine motif in their signal peptide across membranes. TatA could form the protein-conducting channel of the Tat system.</text>
</comment>
<comment type="subunit">
    <text evidence="1">The Tat system comprises two distinct complexes: a TatABC complex, containing multiple copies of TatA, TatB and TatC subunits, and a separate TatA complex, containing only TatA subunits. Substrates initially bind to the TatABC complex, which probably triggers association of the separate TatA complex to form the active translocon.</text>
</comment>
<comment type="subcellular location">
    <subcellularLocation>
        <location evidence="1">Cell inner membrane</location>
        <topology evidence="1">Single-pass membrane protein</topology>
    </subcellularLocation>
</comment>
<comment type="similarity">
    <text evidence="1">Belongs to the TatA/E family.</text>
</comment>
<sequence>MGSFSIWHWLIVLVIVLLVFGTKRLTSGAKDLGSAVKEFKKGMHDDDKPAGKLGDDSRSAEQAREAQAERDRDAR</sequence>